<accession>P75542</accession>
<accession>Q50347</accession>
<proteinExistence type="inferred from homology"/>
<feature type="chain" id="PRO_0000096064" description="Single-stranded DNA-binding protein">
    <location>
        <begin position="1"/>
        <end position="166"/>
    </location>
</feature>
<feature type="domain" description="SSB" evidence="2">
    <location>
        <begin position="1"/>
        <end position="103"/>
    </location>
</feature>
<feature type="region of interest" description="Disordered" evidence="3">
    <location>
        <begin position="140"/>
        <end position="166"/>
    </location>
</feature>
<feature type="sequence conflict" description="In Ref. 2; CAA83579." evidence="4" ref="2">
    <original>Q</original>
    <variation>N</variation>
    <location>
        <position position="158"/>
    </location>
</feature>
<organism>
    <name type="scientific">Mycoplasma pneumoniae (strain ATCC 29342 / M129 / Subtype 1)</name>
    <name type="common">Mycoplasmoides pneumoniae</name>
    <dbReference type="NCBI Taxonomy" id="272634"/>
    <lineage>
        <taxon>Bacteria</taxon>
        <taxon>Bacillati</taxon>
        <taxon>Mycoplasmatota</taxon>
        <taxon>Mycoplasmoidales</taxon>
        <taxon>Mycoplasmoidaceae</taxon>
        <taxon>Mycoplasmoides</taxon>
    </lineage>
</organism>
<keyword id="KW-0238">DNA-binding</keyword>
<keyword id="KW-1185">Reference proteome</keyword>
<sequence>MNRVFLFGKLSFDPNKLQTRTNNIGASFSLACIDSSGFNDSKSYIRITAWGKVASFVLTLKPGDSVFVEGRLSTYKMNNRSDDPNSKATYALQVIADKVYRPDEENSLEQPVDKATVIDSPFLAAKTNATENELAQAFPISLDDEDDDINPILNNDSQLEEESDDE</sequence>
<gene>
    <name type="primary">ssb</name>
    <name type="ordered locus">MPN_229</name>
    <name type="ORF">MP602</name>
</gene>
<comment type="subunit">
    <text evidence="1">Homotetramer.</text>
</comment>
<protein>
    <recommendedName>
        <fullName>Single-stranded DNA-binding protein</fullName>
        <shortName>SSB</shortName>
    </recommendedName>
</protein>
<reference key="1">
    <citation type="journal article" date="1996" name="Nucleic Acids Res.">
        <title>Complete sequence analysis of the genome of the bacterium Mycoplasma pneumoniae.</title>
        <authorList>
            <person name="Himmelreich R."/>
            <person name="Hilbert H."/>
            <person name="Plagens H."/>
            <person name="Pirkl E."/>
            <person name="Li B.-C."/>
            <person name="Herrmann R."/>
        </authorList>
    </citation>
    <scope>NUCLEOTIDE SEQUENCE [LARGE SCALE GENOMIC DNA]</scope>
    <source>
        <strain>ATCC 29342 / M129 / Subtype 1</strain>
    </source>
</reference>
<reference key="2">
    <citation type="journal article" date="1994" name="Mol. Microbiol.">
        <title>Identification and characterization of hitherto unknown Mycoplasma pneumoniae proteins.</title>
        <authorList>
            <person name="Proft T."/>
            <person name="Herrmann R."/>
        </authorList>
    </citation>
    <scope>NUCLEOTIDE SEQUENCE [GENOMIC DNA] OF 83-158</scope>
    <source>
        <strain>ATCC 29342 / M129 / Subtype 1</strain>
    </source>
</reference>
<evidence type="ECO:0000250" key="1"/>
<evidence type="ECO:0000255" key="2">
    <source>
        <dbReference type="PROSITE-ProRule" id="PRU00252"/>
    </source>
</evidence>
<evidence type="ECO:0000256" key="3">
    <source>
        <dbReference type="SAM" id="MobiDB-lite"/>
    </source>
</evidence>
<evidence type="ECO:0000305" key="4"/>
<name>SSB_MYCPN</name>
<dbReference type="EMBL" id="U00089">
    <property type="protein sequence ID" value="AAB96250.1"/>
    <property type="molecule type" value="Genomic_DNA"/>
</dbReference>
<dbReference type="EMBL" id="Z32660">
    <property type="protein sequence ID" value="CAA83579.1"/>
    <property type="molecule type" value="Genomic_DNA"/>
</dbReference>
<dbReference type="PIR" id="S73928">
    <property type="entry name" value="S73928"/>
</dbReference>
<dbReference type="RefSeq" id="NP_109917.1">
    <property type="nucleotide sequence ID" value="NC_000912.1"/>
</dbReference>
<dbReference type="RefSeq" id="WP_010874586.1">
    <property type="nucleotide sequence ID" value="NZ_OU342337.1"/>
</dbReference>
<dbReference type="SMR" id="P75542"/>
<dbReference type="IntAct" id="P75542">
    <property type="interactions" value="1"/>
</dbReference>
<dbReference type="STRING" id="272634.MPN_229"/>
<dbReference type="EnsemblBacteria" id="AAB96250">
    <property type="protein sequence ID" value="AAB96250"/>
    <property type="gene ID" value="MPN_229"/>
</dbReference>
<dbReference type="KEGG" id="mpn:MPN_229"/>
<dbReference type="PATRIC" id="fig|272634.6.peg.248"/>
<dbReference type="HOGENOM" id="CLU_1650259_0_0_14"/>
<dbReference type="OrthoDB" id="9809878at2"/>
<dbReference type="BioCyc" id="MPNE272634:G1GJ3-366-MONOMER"/>
<dbReference type="Proteomes" id="UP000000808">
    <property type="component" value="Chromosome"/>
</dbReference>
<dbReference type="GO" id="GO:0009295">
    <property type="term" value="C:nucleoid"/>
    <property type="evidence" value="ECO:0007669"/>
    <property type="project" value="TreeGrafter"/>
</dbReference>
<dbReference type="GO" id="GO:0003697">
    <property type="term" value="F:single-stranded DNA binding"/>
    <property type="evidence" value="ECO:0007669"/>
    <property type="project" value="InterPro"/>
</dbReference>
<dbReference type="GO" id="GO:0006260">
    <property type="term" value="P:DNA replication"/>
    <property type="evidence" value="ECO:0007669"/>
    <property type="project" value="InterPro"/>
</dbReference>
<dbReference type="CDD" id="cd04496">
    <property type="entry name" value="SSB_OBF"/>
    <property type="match status" value="1"/>
</dbReference>
<dbReference type="Gene3D" id="2.40.50.140">
    <property type="entry name" value="Nucleic acid-binding proteins"/>
    <property type="match status" value="1"/>
</dbReference>
<dbReference type="InterPro" id="IPR012340">
    <property type="entry name" value="NA-bd_OB-fold"/>
</dbReference>
<dbReference type="InterPro" id="IPR000424">
    <property type="entry name" value="Primosome_PriB/ssb"/>
</dbReference>
<dbReference type="InterPro" id="IPR011344">
    <property type="entry name" value="ssDNA-bd"/>
</dbReference>
<dbReference type="PANTHER" id="PTHR10302">
    <property type="entry name" value="SINGLE-STRANDED DNA-BINDING PROTEIN"/>
    <property type="match status" value="1"/>
</dbReference>
<dbReference type="PANTHER" id="PTHR10302:SF27">
    <property type="entry name" value="SINGLE-STRANDED DNA-BINDING PROTEIN"/>
    <property type="match status" value="1"/>
</dbReference>
<dbReference type="Pfam" id="PF00436">
    <property type="entry name" value="SSB"/>
    <property type="match status" value="1"/>
</dbReference>
<dbReference type="PIRSF" id="PIRSF002070">
    <property type="entry name" value="SSB"/>
    <property type="match status" value="1"/>
</dbReference>
<dbReference type="SUPFAM" id="SSF50249">
    <property type="entry name" value="Nucleic acid-binding proteins"/>
    <property type="match status" value="1"/>
</dbReference>
<dbReference type="PROSITE" id="PS50935">
    <property type="entry name" value="SSB"/>
    <property type="match status" value="1"/>
</dbReference>